<keyword id="KW-0963">Cytoplasm</keyword>
<keyword id="KW-0328">Glycosyltransferase</keyword>
<keyword id="KW-0660">Purine salvage</keyword>
<keyword id="KW-1185">Reference proteome</keyword>
<keyword id="KW-0808">Transferase</keyword>
<sequence length="187" mass="20529">MKKVLDETLESSPIIKRGEYNYFIHPIADGVPLFTSDLLRDVATRTIQRIDTNIDKIVTAEAMGIPIATAISMSTDIPYVVMRKRQYFLEGEVPVHQETGYSKGELYLNGVEKGDRVTIVDDVLSTGGTLIAVIKALEKAGAEIVDIVCVIERGDGKSKVKEITGYDVQTLVKIDVTENGVVILESN</sequence>
<reference key="1">
    <citation type="submission" date="2010-05" db="EMBL/GenBank/DDBJ databases">
        <title>Complete sequence of Methanococcus voltae A3.</title>
        <authorList>
            <consortium name="US DOE Joint Genome Institute"/>
            <person name="Lucas S."/>
            <person name="Copeland A."/>
            <person name="Lapidus A."/>
            <person name="Cheng J.-F."/>
            <person name="Bruce D."/>
            <person name="Goodwin L."/>
            <person name="Pitluck S."/>
            <person name="Lowry S."/>
            <person name="Clum A."/>
            <person name="Land M."/>
            <person name="Hauser L."/>
            <person name="Kyrpides N."/>
            <person name="Mikhailova N."/>
            <person name="Whitman W.B."/>
            <person name="Woyke T."/>
        </authorList>
    </citation>
    <scope>NUCLEOTIDE SEQUENCE [LARGE SCALE GENOMIC DNA]</scope>
    <source>
        <strain>ATCC BAA-1334 / A3</strain>
    </source>
</reference>
<feature type="chain" id="PRO_0000415473" description="Hypoxanthine/guanine phosphoribosyltransferase">
    <location>
        <begin position="1"/>
        <end position="187"/>
    </location>
</feature>
<organism>
    <name type="scientific">Methanococcus voltae (strain ATCC BAA-1334 / A3)</name>
    <dbReference type="NCBI Taxonomy" id="456320"/>
    <lineage>
        <taxon>Archaea</taxon>
        <taxon>Methanobacteriati</taxon>
        <taxon>Methanobacteriota</taxon>
        <taxon>Methanomada group</taxon>
        <taxon>Methanococci</taxon>
        <taxon>Methanococcales</taxon>
        <taxon>Methanococcaceae</taxon>
        <taxon>Methanococcus</taxon>
    </lineage>
</organism>
<gene>
    <name evidence="1" type="primary">hpt</name>
    <name type="ordered locus">Mvol_1560</name>
</gene>
<protein>
    <recommendedName>
        <fullName evidence="1">Hypoxanthine/guanine phosphoribosyltransferase</fullName>
        <shortName evidence="1">HGPRTase</shortName>
        <ecNumber evidence="1">2.4.2.8</ecNumber>
    </recommendedName>
</protein>
<dbReference type="EC" id="2.4.2.8" evidence="1"/>
<dbReference type="EMBL" id="CP002057">
    <property type="protein sequence ID" value="ADI37215.1"/>
    <property type="molecule type" value="Genomic_DNA"/>
</dbReference>
<dbReference type="SMR" id="D7DQT8"/>
<dbReference type="FunCoup" id="D7DQT8">
    <property type="interactions" value="50"/>
</dbReference>
<dbReference type="STRING" id="456320.Mvol_1560"/>
<dbReference type="KEGG" id="mvo:Mvol_1560"/>
<dbReference type="eggNOG" id="arCOG00030">
    <property type="taxonomic scope" value="Archaea"/>
</dbReference>
<dbReference type="HOGENOM" id="CLU_126376_0_0_2"/>
<dbReference type="InParanoid" id="D7DQT8"/>
<dbReference type="OrthoDB" id="8323at2157"/>
<dbReference type="UniPathway" id="UPA00591">
    <property type="reaction ID" value="UER00648"/>
</dbReference>
<dbReference type="Proteomes" id="UP000007722">
    <property type="component" value="Chromosome"/>
</dbReference>
<dbReference type="GO" id="GO:0005737">
    <property type="term" value="C:cytoplasm"/>
    <property type="evidence" value="ECO:0007669"/>
    <property type="project" value="UniProtKB-SubCell"/>
</dbReference>
<dbReference type="GO" id="GO:0052657">
    <property type="term" value="F:guanine phosphoribosyltransferase activity"/>
    <property type="evidence" value="ECO:0007669"/>
    <property type="project" value="RHEA"/>
</dbReference>
<dbReference type="GO" id="GO:0004422">
    <property type="term" value="F:hypoxanthine phosphoribosyltransferase activity"/>
    <property type="evidence" value="ECO:0007669"/>
    <property type="project" value="UniProtKB-UniRule"/>
</dbReference>
<dbReference type="GO" id="GO:0032264">
    <property type="term" value="P:IMP salvage"/>
    <property type="evidence" value="ECO:0007669"/>
    <property type="project" value="UniProtKB-UniRule"/>
</dbReference>
<dbReference type="GO" id="GO:0006166">
    <property type="term" value="P:purine ribonucleoside salvage"/>
    <property type="evidence" value="ECO:0007669"/>
    <property type="project" value="UniProtKB-KW"/>
</dbReference>
<dbReference type="CDD" id="cd06223">
    <property type="entry name" value="PRTases_typeI"/>
    <property type="match status" value="1"/>
</dbReference>
<dbReference type="Gene3D" id="3.40.50.2020">
    <property type="match status" value="1"/>
</dbReference>
<dbReference type="HAMAP" id="MF_01467">
    <property type="entry name" value="Hypx_phosphoribosyltr"/>
    <property type="match status" value="1"/>
</dbReference>
<dbReference type="InterPro" id="IPR026597">
    <property type="entry name" value="HGPRTase-like"/>
</dbReference>
<dbReference type="InterPro" id="IPR000836">
    <property type="entry name" value="PRibTrfase_dom"/>
</dbReference>
<dbReference type="InterPro" id="IPR029057">
    <property type="entry name" value="PRTase-like"/>
</dbReference>
<dbReference type="InterPro" id="IPR050118">
    <property type="entry name" value="Pur/Pyrimidine_PRTase"/>
</dbReference>
<dbReference type="NCBIfam" id="NF040646">
    <property type="entry name" value="HPT_Archaea"/>
    <property type="match status" value="1"/>
</dbReference>
<dbReference type="NCBIfam" id="NF002635">
    <property type="entry name" value="PRK02304.1-4"/>
    <property type="match status" value="1"/>
</dbReference>
<dbReference type="PANTHER" id="PTHR43864">
    <property type="entry name" value="HYPOXANTHINE/GUANINE PHOSPHORIBOSYLTRANSFERASE"/>
    <property type="match status" value="1"/>
</dbReference>
<dbReference type="PANTHER" id="PTHR43864:SF1">
    <property type="entry name" value="XANTHINE PHOSPHORIBOSYLTRANSFERASE"/>
    <property type="match status" value="1"/>
</dbReference>
<dbReference type="Pfam" id="PF00156">
    <property type="entry name" value="Pribosyltran"/>
    <property type="match status" value="1"/>
</dbReference>
<dbReference type="SUPFAM" id="SSF53271">
    <property type="entry name" value="PRTase-like"/>
    <property type="match status" value="1"/>
</dbReference>
<proteinExistence type="inferred from homology"/>
<comment type="function">
    <text evidence="1">Catalyzes a salvage reaction resulting in the formation of IMP that is energically less costly than de novo synthesis.</text>
</comment>
<comment type="catalytic activity">
    <reaction evidence="1">
        <text>IMP + diphosphate = hypoxanthine + 5-phospho-alpha-D-ribose 1-diphosphate</text>
        <dbReference type="Rhea" id="RHEA:17973"/>
        <dbReference type="ChEBI" id="CHEBI:17368"/>
        <dbReference type="ChEBI" id="CHEBI:33019"/>
        <dbReference type="ChEBI" id="CHEBI:58017"/>
        <dbReference type="ChEBI" id="CHEBI:58053"/>
        <dbReference type="EC" id="2.4.2.8"/>
    </reaction>
</comment>
<comment type="catalytic activity">
    <reaction evidence="1">
        <text>GMP + diphosphate = guanine + 5-phospho-alpha-D-ribose 1-diphosphate</text>
        <dbReference type="Rhea" id="RHEA:25424"/>
        <dbReference type="ChEBI" id="CHEBI:16235"/>
        <dbReference type="ChEBI" id="CHEBI:33019"/>
        <dbReference type="ChEBI" id="CHEBI:58017"/>
        <dbReference type="ChEBI" id="CHEBI:58115"/>
        <dbReference type="EC" id="2.4.2.8"/>
    </reaction>
</comment>
<comment type="pathway">
    <text evidence="1">Purine metabolism; IMP biosynthesis via salvage pathway; IMP from hypoxanthine: step 1/1.</text>
</comment>
<comment type="subunit">
    <text evidence="1">Homodimer.</text>
</comment>
<comment type="subcellular location">
    <subcellularLocation>
        <location evidence="1">Cytoplasm</location>
    </subcellularLocation>
</comment>
<comment type="similarity">
    <text evidence="1">Belongs to the purine/pyrimidine phosphoribosyltransferase family. Archaeal HPRT subfamily.</text>
</comment>
<evidence type="ECO:0000255" key="1">
    <source>
        <dbReference type="HAMAP-Rule" id="MF_01467"/>
    </source>
</evidence>
<name>HPRT_METV3</name>
<accession>D7DQT8</accession>